<reference key="1">
    <citation type="journal article" date="1999" name="Plant Biol.">
        <title>Differential expression and nuclear localization of response regulator-like proteins from Arabidopsis thaliana.</title>
        <authorList>
            <person name="Lohrmann J."/>
            <person name="Buchholz G."/>
            <person name="Keitel C."/>
            <person name="Sweere U."/>
            <person name="Kircher S."/>
            <person name="Baeurle I."/>
            <person name="Kudla J."/>
            <person name="Schaefer E."/>
            <person name="Harter K."/>
        </authorList>
    </citation>
    <scope>NUCLEOTIDE SEQUENCE [MRNA]</scope>
    <source>
        <strain>cv. Columbia</strain>
        <tissue>Leaf</tissue>
    </source>
</reference>
<reference key="2">
    <citation type="journal article" date="1999" name="Nature">
        <title>Sequence and analysis of chromosome 4 of the plant Arabidopsis thaliana.</title>
        <authorList>
            <person name="Mayer K.F.X."/>
            <person name="Schueller C."/>
            <person name="Wambutt R."/>
            <person name="Murphy G."/>
            <person name="Volckaert G."/>
            <person name="Pohl T."/>
            <person name="Duesterhoeft A."/>
            <person name="Stiekema W."/>
            <person name="Entian K.-D."/>
            <person name="Terryn N."/>
            <person name="Harris B."/>
            <person name="Ansorge W."/>
            <person name="Brandt P."/>
            <person name="Grivell L.A."/>
            <person name="Rieger M."/>
            <person name="Weichselgartner M."/>
            <person name="de Simone V."/>
            <person name="Obermaier B."/>
            <person name="Mache R."/>
            <person name="Mueller M."/>
            <person name="Kreis M."/>
            <person name="Delseny M."/>
            <person name="Puigdomenech P."/>
            <person name="Watson M."/>
            <person name="Schmidtheini T."/>
            <person name="Reichert B."/>
            <person name="Portetelle D."/>
            <person name="Perez-Alonso M."/>
            <person name="Boutry M."/>
            <person name="Bancroft I."/>
            <person name="Vos P."/>
            <person name="Hoheisel J."/>
            <person name="Zimmermann W."/>
            <person name="Wedler H."/>
            <person name="Ridley P."/>
            <person name="Langham S.-A."/>
            <person name="McCullagh B."/>
            <person name="Bilham L."/>
            <person name="Robben J."/>
            <person name="van der Schueren J."/>
            <person name="Grymonprez B."/>
            <person name="Chuang Y.-J."/>
            <person name="Vandenbussche F."/>
            <person name="Braeken M."/>
            <person name="Weltjens I."/>
            <person name="Voet M."/>
            <person name="Bastiaens I."/>
            <person name="Aert R."/>
            <person name="Defoor E."/>
            <person name="Weitzenegger T."/>
            <person name="Bothe G."/>
            <person name="Ramsperger U."/>
            <person name="Hilbert H."/>
            <person name="Braun M."/>
            <person name="Holzer E."/>
            <person name="Brandt A."/>
            <person name="Peters S."/>
            <person name="van Staveren M."/>
            <person name="Dirkse W."/>
            <person name="Mooijman P."/>
            <person name="Klein Lankhorst R."/>
            <person name="Rose M."/>
            <person name="Hauf J."/>
            <person name="Koetter P."/>
            <person name="Berneiser S."/>
            <person name="Hempel S."/>
            <person name="Feldpausch M."/>
            <person name="Lamberth S."/>
            <person name="Van den Daele H."/>
            <person name="De Keyser A."/>
            <person name="Buysshaert C."/>
            <person name="Gielen J."/>
            <person name="Villarroel R."/>
            <person name="De Clercq R."/>
            <person name="van Montagu M."/>
            <person name="Rogers J."/>
            <person name="Cronin A."/>
            <person name="Quail M.A."/>
            <person name="Bray-Allen S."/>
            <person name="Clark L."/>
            <person name="Doggett J."/>
            <person name="Hall S."/>
            <person name="Kay M."/>
            <person name="Lennard N."/>
            <person name="McLay K."/>
            <person name="Mayes R."/>
            <person name="Pettett A."/>
            <person name="Rajandream M.A."/>
            <person name="Lyne M."/>
            <person name="Benes V."/>
            <person name="Rechmann S."/>
            <person name="Borkova D."/>
            <person name="Bloecker H."/>
            <person name="Scharfe M."/>
            <person name="Grimm M."/>
            <person name="Loehnert T.-H."/>
            <person name="Dose S."/>
            <person name="de Haan M."/>
            <person name="Maarse A.C."/>
            <person name="Schaefer M."/>
            <person name="Mueller-Auer S."/>
            <person name="Gabel C."/>
            <person name="Fuchs M."/>
            <person name="Fartmann B."/>
            <person name="Granderath K."/>
            <person name="Dauner D."/>
            <person name="Herzl A."/>
            <person name="Neumann S."/>
            <person name="Argiriou A."/>
            <person name="Vitale D."/>
            <person name="Liguori R."/>
            <person name="Piravandi E."/>
            <person name="Massenet O."/>
            <person name="Quigley F."/>
            <person name="Clabauld G."/>
            <person name="Muendlein A."/>
            <person name="Felber R."/>
            <person name="Schnabl S."/>
            <person name="Hiller R."/>
            <person name="Schmidt W."/>
            <person name="Lecharny A."/>
            <person name="Aubourg S."/>
            <person name="Chefdor F."/>
            <person name="Cooke R."/>
            <person name="Berger C."/>
            <person name="Monfort A."/>
            <person name="Casacuberta E."/>
            <person name="Gibbons T."/>
            <person name="Weber N."/>
            <person name="Vandenbol M."/>
            <person name="Bargues M."/>
            <person name="Terol J."/>
            <person name="Torres A."/>
            <person name="Perez-Perez A."/>
            <person name="Purnelle B."/>
            <person name="Bent E."/>
            <person name="Johnson S."/>
            <person name="Tacon D."/>
            <person name="Jesse T."/>
            <person name="Heijnen L."/>
            <person name="Schwarz S."/>
            <person name="Scholler P."/>
            <person name="Heber S."/>
            <person name="Francs P."/>
            <person name="Bielke C."/>
            <person name="Frishman D."/>
            <person name="Haase D."/>
            <person name="Lemcke K."/>
            <person name="Mewes H.-W."/>
            <person name="Stocker S."/>
            <person name="Zaccaria P."/>
            <person name="Bevan M."/>
            <person name="Wilson R.K."/>
            <person name="de la Bastide M."/>
            <person name="Habermann K."/>
            <person name="Parnell L."/>
            <person name="Dedhia N."/>
            <person name="Gnoj L."/>
            <person name="Schutz K."/>
            <person name="Huang E."/>
            <person name="Spiegel L."/>
            <person name="Sekhon M."/>
            <person name="Murray J."/>
            <person name="Sheet P."/>
            <person name="Cordes M."/>
            <person name="Abu-Threideh J."/>
            <person name="Stoneking T."/>
            <person name="Kalicki J."/>
            <person name="Graves T."/>
            <person name="Harmon G."/>
            <person name="Edwards J."/>
            <person name="Latreille P."/>
            <person name="Courtney L."/>
            <person name="Cloud J."/>
            <person name="Abbott A."/>
            <person name="Scott K."/>
            <person name="Johnson D."/>
            <person name="Minx P."/>
            <person name="Bentley D."/>
            <person name="Fulton B."/>
            <person name="Miller N."/>
            <person name="Greco T."/>
            <person name="Kemp K."/>
            <person name="Kramer J."/>
            <person name="Fulton L."/>
            <person name="Mardis E."/>
            <person name="Dante M."/>
            <person name="Pepin K."/>
            <person name="Hillier L.W."/>
            <person name="Nelson J."/>
            <person name="Spieth J."/>
            <person name="Ryan E."/>
            <person name="Andrews S."/>
            <person name="Geisel C."/>
            <person name="Layman D."/>
            <person name="Du H."/>
            <person name="Ali J."/>
            <person name="Berghoff A."/>
            <person name="Jones K."/>
            <person name="Drone K."/>
            <person name="Cotton M."/>
            <person name="Joshu C."/>
            <person name="Antonoiu B."/>
            <person name="Zidanic M."/>
            <person name="Strong C."/>
            <person name="Sun H."/>
            <person name="Lamar B."/>
            <person name="Yordan C."/>
            <person name="Ma P."/>
            <person name="Zhong J."/>
            <person name="Preston R."/>
            <person name="Vil D."/>
            <person name="Shekher M."/>
            <person name="Matero A."/>
            <person name="Shah R."/>
            <person name="Swaby I.K."/>
            <person name="O'Shaughnessy A."/>
            <person name="Rodriguez M."/>
            <person name="Hoffman J."/>
            <person name="Till S."/>
            <person name="Granat S."/>
            <person name="Shohdy N."/>
            <person name="Hasegawa A."/>
            <person name="Hameed A."/>
            <person name="Lodhi M."/>
            <person name="Johnson A."/>
            <person name="Chen E."/>
            <person name="Marra M.A."/>
            <person name="Martienssen R."/>
            <person name="McCombie W.R."/>
        </authorList>
    </citation>
    <scope>NUCLEOTIDE SEQUENCE [LARGE SCALE GENOMIC DNA]</scope>
    <source>
        <strain>cv. Columbia</strain>
    </source>
</reference>
<reference key="3">
    <citation type="journal article" date="2017" name="Plant J.">
        <title>Araport11: a complete reannotation of the Arabidopsis thaliana reference genome.</title>
        <authorList>
            <person name="Cheng C.Y."/>
            <person name="Krishnakumar V."/>
            <person name="Chan A.P."/>
            <person name="Thibaud-Nissen F."/>
            <person name="Schobel S."/>
            <person name="Town C.D."/>
        </authorList>
    </citation>
    <scope>GENOME REANNOTATION</scope>
    <source>
        <strain>cv. Columbia</strain>
    </source>
</reference>
<reference key="4">
    <citation type="journal article" date="2003" name="Science">
        <title>Empirical analysis of transcriptional activity in the Arabidopsis genome.</title>
        <authorList>
            <person name="Yamada K."/>
            <person name="Lim J."/>
            <person name="Dale J.M."/>
            <person name="Chen H."/>
            <person name="Shinn P."/>
            <person name="Palm C.J."/>
            <person name="Southwick A.M."/>
            <person name="Wu H.C."/>
            <person name="Kim C.J."/>
            <person name="Nguyen M."/>
            <person name="Pham P.K."/>
            <person name="Cheuk R.F."/>
            <person name="Karlin-Newmann G."/>
            <person name="Liu S.X."/>
            <person name="Lam B."/>
            <person name="Sakano H."/>
            <person name="Wu T."/>
            <person name="Yu G."/>
            <person name="Miranda M."/>
            <person name="Quach H.L."/>
            <person name="Tripp M."/>
            <person name="Chang C.H."/>
            <person name="Lee J.M."/>
            <person name="Toriumi M.J."/>
            <person name="Chan M.M."/>
            <person name="Tang C.C."/>
            <person name="Onodera C.S."/>
            <person name="Deng J.M."/>
            <person name="Akiyama K."/>
            <person name="Ansari Y."/>
            <person name="Arakawa T."/>
            <person name="Banh J."/>
            <person name="Banno F."/>
            <person name="Bowser L."/>
            <person name="Brooks S.Y."/>
            <person name="Carninci P."/>
            <person name="Chao Q."/>
            <person name="Choy N."/>
            <person name="Enju A."/>
            <person name="Goldsmith A.D."/>
            <person name="Gurjal M."/>
            <person name="Hansen N.F."/>
            <person name="Hayashizaki Y."/>
            <person name="Johnson-Hopson C."/>
            <person name="Hsuan V.W."/>
            <person name="Iida K."/>
            <person name="Karnes M."/>
            <person name="Khan S."/>
            <person name="Koesema E."/>
            <person name="Ishida J."/>
            <person name="Jiang P.X."/>
            <person name="Jones T."/>
            <person name="Kawai J."/>
            <person name="Kamiya A."/>
            <person name="Meyers C."/>
            <person name="Nakajima M."/>
            <person name="Narusaka M."/>
            <person name="Seki M."/>
            <person name="Sakurai T."/>
            <person name="Satou M."/>
            <person name="Tamse R."/>
            <person name="Vaysberg M."/>
            <person name="Wallender E.K."/>
            <person name="Wong C."/>
            <person name="Yamamura Y."/>
            <person name="Yuan S."/>
            <person name="Shinozaki K."/>
            <person name="Davis R.W."/>
            <person name="Theologis A."/>
            <person name="Ecker J.R."/>
        </authorList>
    </citation>
    <scope>NUCLEOTIDE SEQUENCE [LARGE SCALE MRNA]</scope>
    <source>
        <strain>cv. Columbia</strain>
    </source>
</reference>
<reference key="5">
    <citation type="journal article" date="2001" name="Nature">
        <title>Two-component circuitry in Arabidopsis cytokinin signal transduction.</title>
        <authorList>
            <person name="Hwang I."/>
            <person name="Sheen J."/>
        </authorList>
    </citation>
    <scope>FUNCTION</scope>
</reference>
<reference key="6">
    <citation type="journal article" date="2002" name="Plant Cell">
        <title>Molecular structure of the GARP family of plant Myb-related DNA binding motifs of the Arabidopsis response regulators.</title>
        <authorList>
            <person name="Hosoda K."/>
            <person name="Imamura A."/>
            <person name="Katoh E."/>
            <person name="Hatta T."/>
            <person name="Tachiki M."/>
            <person name="Yamada H."/>
            <person name="Mizuno T."/>
            <person name="Yamazaki T."/>
        </authorList>
    </citation>
    <scope>DNA-BINDING SPECIFICITY</scope>
    <scope>SUBCELLULAR LOCATION</scope>
    <scope>STRUCTURE BY NMR OF 179-242</scope>
</reference>
<reference key="7">
    <citation type="journal article" date="2004" name="Plant Physiol.">
        <title>Type-B response regulators display overlapping expression patterns in Arabidopsis.</title>
        <authorList>
            <person name="Mason M.G."/>
            <person name="Li J."/>
            <person name="Mathews D.E."/>
            <person name="Kieber J.J."/>
            <person name="Schaller G.E."/>
        </authorList>
    </citation>
    <scope>TISSUE SPECIFICITY</scope>
</reference>
<accession>O49397</accession>
<protein>
    <recommendedName>
        <fullName>Two-component response regulator ARR10</fullName>
    </recommendedName>
    <alternativeName>
        <fullName>Receiver-like protein 4</fullName>
    </alternativeName>
</protein>
<proteinExistence type="evidence at protein level"/>
<gene>
    <name type="primary">ARR10</name>
    <name type="synonym">ARP4</name>
    <name type="ordered locus">At4g31920</name>
    <name type="ORF">F10N7.270</name>
</gene>
<feature type="chain" id="PRO_0000132295" description="Two-component response regulator ARR10">
    <location>
        <begin position="1"/>
        <end position="552"/>
    </location>
</feature>
<feature type="domain" description="Response regulatory" evidence="2">
    <location>
        <begin position="18"/>
        <end position="133"/>
    </location>
</feature>
<feature type="DNA-binding region" description="Myb-like GARP" evidence="3">
    <location>
        <begin position="185"/>
        <end position="235"/>
    </location>
</feature>
<feature type="region of interest" description="Disordered" evidence="4">
    <location>
        <begin position="139"/>
        <end position="181"/>
    </location>
</feature>
<feature type="coiled-coil region" evidence="1">
    <location>
        <begin position="151"/>
        <end position="173"/>
    </location>
</feature>
<feature type="short sequence motif" description="Nuclear localization signal" evidence="1">
    <location>
        <begin position="182"/>
        <end position="185"/>
    </location>
</feature>
<feature type="compositionally biased region" description="Acidic residues" evidence="4">
    <location>
        <begin position="163"/>
        <end position="177"/>
    </location>
</feature>
<feature type="modified residue" description="4-aspartylphosphate" evidence="2">
    <location>
        <position position="69"/>
    </location>
</feature>
<feature type="helix" evidence="9">
    <location>
        <begin position="190"/>
        <end position="203"/>
    </location>
</feature>
<feature type="turn" evidence="9">
    <location>
        <begin position="205"/>
        <end position="207"/>
    </location>
</feature>
<feature type="helix" evidence="9">
    <location>
        <begin position="210"/>
        <end position="217"/>
    </location>
</feature>
<feature type="helix" evidence="9">
    <location>
        <begin position="224"/>
        <end position="239"/>
    </location>
</feature>
<sequence>MTMEQEIEVLDQFPVGMRVLAVDDDQTCLRILQTLLQRCQYHVTTTNQAQTALELLRENKNKFDLVISDVDMPDMDGFKLLELVGLEMDLPVIMLSAHSDPKYVMKGVKHGACDYLLKPVRIEELKNIWQHVVRKSKLKKNKSNVSNGSGNCDKANRKRKEQYEEEEEEERGNDNDDPTAQKKPRVLWTHELHNKFLAAVDHLGVERAVPKKILDLMNVDKLTRENVASHLQKFRVALKKVSDDAIQQANRAAIDSHFMQMNSQKGLGGFYHHHRGIPVGSGQFHGGTTMMRHYSSNRNLGRLNSLGAGMFQPVSSSFPRNHNDGGNILQGLPLEELQINNNINRAFPSFTSQQNSPMVAPSNLLLLEGNPQSSSLPSNPGFSPHFEISKRLEHWSNAALSTNIPQSDVHSKPDTLEWNAFCDSASPLVNPNLDTNPASLCRNTGFGSTNAAQTDFFYPLQMNQQPANNSGPVTEAQLFRSSNPNEGLLMGQQKLQSGLMASDAGSLDDIVNSLMTQEQSQSDFSEGDWDLDGLAHSEHAYEKLHFPFSLSA</sequence>
<name>ARR10_ARATH</name>
<comment type="function">
    <text evidence="5">Transcriptional activator that binds specifically to the DNA sequence 5'-[AG]GATT-3'. Functions as a response regulator involved in His-to-Asp phosphorelay signal transduction system. Phosphorylation of the Asp residue in the receiver domain activates the ability of the protein to promote the transcription of target genes. Could directly activate some type-A response regulators in response to cytokinins.</text>
</comment>
<comment type="subunit">
    <text>Binds the target DNA as a monomer.</text>
</comment>
<comment type="interaction">
    <interactant intactId="EBI-1101329">
        <id>O49397</id>
    </interactant>
    <interactant intactId="EBI-1100687">
        <id>Q9ZNV8</id>
        <label>AHP2</label>
    </interactant>
    <organismsDiffer>false</organismsDiffer>
    <experiments>3</experiments>
</comment>
<comment type="subcellular location">
    <subcellularLocation>
        <location evidence="3 6">Nucleus</location>
    </subcellularLocation>
</comment>
<comment type="tissue specificity">
    <text evidence="7">Detected in the whole plant. Predominantly expressed in roots and leaves.</text>
</comment>
<comment type="PTM">
    <text>Two-component system major event consists of a His-to-Asp phosphorelay between a sensor histidine kinase (HK) and a response regulator (RR). In plants, the His-to-Asp phosphorelay involves an additional intermediate named Histidine-containing phosphotransfer protein (HPt). This multistep phosphorelay consists of a His-Asp-His-Asp sequential transfer of a phosphate group between first a His and an Asp of the HK protein, followed by the transfer to a conserved His of the HPt protein and finally the transfer to an Asp in the receiver domain of the RR protein.</text>
</comment>
<comment type="similarity">
    <text evidence="8">Belongs to the ARR family. Type-B subfamily.</text>
</comment>
<keyword id="KW-0002">3D-structure</keyword>
<keyword id="KW-0010">Activator</keyword>
<keyword id="KW-0175">Coiled coil</keyword>
<keyword id="KW-0932">Cytokinin signaling pathway</keyword>
<keyword id="KW-0238">DNA-binding</keyword>
<keyword id="KW-0539">Nucleus</keyword>
<keyword id="KW-0597">Phosphoprotein</keyword>
<keyword id="KW-1185">Reference proteome</keyword>
<keyword id="KW-0804">Transcription</keyword>
<keyword id="KW-0805">Transcription regulation</keyword>
<keyword id="KW-0902">Two-component regulatory system</keyword>
<dbReference type="EMBL" id="AJ005195">
    <property type="protein sequence ID" value="CAA06432.1"/>
    <property type="molecule type" value="mRNA"/>
</dbReference>
<dbReference type="EMBL" id="AL021636">
    <property type="protein sequence ID" value="CAA16597.1"/>
    <property type="molecule type" value="Genomic_DNA"/>
</dbReference>
<dbReference type="EMBL" id="AL161580">
    <property type="protein sequence ID" value="CAB79910.1"/>
    <property type="molecule type" value="Genomic_DNA"/>
</dbReference>
<dbReference type="EMBL" id="CP002687">
    <property type="protein sequence ID" value="AEE85979.1"/>
    <property type="molecule type" value="Genomic_DNA"/>
</dbReference>
<dbReference type="EMBL" id="BT003158">
    <property type="protein sequence ID" value="AAO24590.1"/>
    <property type="molecule type" value="mRNA"/>
</dbReference>
<dbReference type="PIR" id="T04653">
    <property type="entry name" value="T04653"/>
</dbReference>
<dbReference type="RefSeq" id="NP_194920.1">
    <property type="nucleotide sequence ID" value="NM_119343.4"/>
</dbReference>
<dbReference type="PDB" id="1IRZ">
    <property type="method" value="NMR"/>
    <property type="chains" value="A=179-242"/>
</dbReference>
<dbReference type="PDBsum" id="1IRZ"/>
<dbReference type="BMRB" id="O49397"/>
<dbReference type="SMR" id="O49397"/>
<dbReference type="BioGRID" id="14608">
    <property type="interactions" value="10"/>
</dbReference>
<dbReference type="FunCoup" id="O49397">
    <property type="interactions" value="1155"/>
</dbReference>
<dbReference type="IntAct" id="O49397">
    <property type="interactions" value="7"/>
</dbReference>
<dbReference type="STRING" id="3702.O49397"/>
<dbReference type="PaxDb" id="3702-AT4G31920.1"/>
<dbReference type="ProteomicsDB" id="246926"/>
<dbReference type="EnsemblPlants" id="AT4G31920.1">
    <property type="protein sequence ID" value="AT4G31920.1"/>
    <property type="gene ID" value="AT4G31920"/>
</dbReference>
<dbReference type="GeneID" id="829322"/>
<dbReference type="Gramene" id="AT4G31920.1">
    <property type="protein sequence ID" value="AT4G31920.1"/>
    <property type="gene ID" value="AT4G31920"/>
</dbReference>
<dbReference type="KEGG" id="ath:AT4G31920"/>
<dbReference type="Araport" id="AT4G31920"/>
<dbReference type="TAIR" id="AT4G31920">
    <property type="gene designation" value="RR10"/>
</dbReference>
<dbReference type="eggNOG" id="KOG1601">
    <property type="taxonomic scope" value="Eukaryota"/>
</dbReference>
<dbReference type="HOGENOM" id="CLU_024359_0_0_1"/>
<dbReference type="InParanoid" id="O49397"/>
<dbReference type="OMA" id="DVHSKPD"/>
<dbReference type="OrthoDB" id="60033at2759"/>
<dbReference type="PhylomeDB" id="O49397"/>
<dbReference type="EvolutionaryTrace" id="O49397"/>
<dbReference type="PRO" id="PR:O49397"/>
<dbReference type="Proteomes" id="UP000006548">
    <property type="component" value="Chromosome 4"/>
</dbReference>
<dbReference type="ExpressionAtlas" id="O49397">
    <property type="expression patterns" value="baseline and differential"/>
</dbReference>
<dbReference type="GO" id="GO:0005634">
    <property type="term" value="C:nucleus"/>
    <property type="evidence" value="ECO:0000314"/>
    <property type="project" value="TAIR"/>
</dbReference>
<dbReference type="GO" id="GO:0003677">
    <property type="term" value="F:DNA binding"/>
    <property type="evidence" value="ECO:0007669"/>
    <property type="project" value="UniProtKB-KW"/>
</dbReference>
<dbReference type="GO" id="GO:0003700">
    <property type="term" value="F:DNA-binding transcription factor activity"/>
    <property type="evidence" value="ECO:0000314"/>
    <property type="project" value="TAIR"/>
</dbReference>
<dbReference type="GO" id="GO:0000156">
    <property type="term" value="F:phosphorelay response regulator activity"/>
    <property type="evidence" value="ECO:0000250"/>
    <property type="project" value="TAIR"/>
</dbReference>
<dbReference type="GO" id="GO:1990110">
    <property type="term" value="P:callus formation"/>
    <property type="evidence" value="ECO:0000316"/>
    <property type="project" value="TAIR"/>
</dbReference>
<dbReference type="GO" id="GO:0071368">
    <property type="term" value="P:cellular response to cytokinin stimulus"/>
    <property type="evidence" value="ECO:0000315"/>
    <property type="project" value="TAIR"/>
</dbReference>
<dbReference type="GO" id="GO:0009736">
    <property type="term" value="P:cytokinin-activated signaling pathway"/>
    <property type="evidence" value="ECO:0000316"/>
    <property type="project" value="TAIR"/>
</dbReference>
<dbReference type="GO" id="GO:0010492">
    <property type="term" value="P:maintenance of shoot apical meristem identity"/>
    <property type="evidence" value="ECO:0000316"/>
    <property type="project" value="TAIR"/>
</dbReference>
<dbReference type="GO" id="GO:0080022">
    <property type="term" value="P:primary root development"/>
    <property type="evidence" value="ECO:0000316"/>
    <property type="project" value="TAIR"/>
</dbReference>
<dbReference type="GO" id="GO:0031537">
    <property type="term" value="P:regulation of anthocyanin metabolic process"/>
    <property type="evidence" value="ECO:0000316"/>
    <property type="project" value="TAIR"/>
</dbReference>
<dbReference type="GO" id="GO:0010380">
    <property type="term" value="P:regulation of chlorophyll biosynthetic process"/>
    <property type="evidence" value="ECO:0000316"/>
    <property type="project" value="TAIR"/>
</dbReference>
<dbReference type="GO" id="GO:0080036">
    <property type="term" value="P:regulation of cytokinin-activated signaling pathway"/>
    <property type="evidence" value="ECO:0000315"/>
    <property type="project" value="CACAO"/>
</dbReference>
<dbReference type="GO" id="GO:0010082">
    <property type="term" value="P:regulation of root meristem growth"/>
    <property type="evidence" value="ECO:0000315"/>
    <property type="project" value="CACAO"/>
</dbReference>
<dbReference type="GO" id="GO:0080113">
    <property type="term" value="P:regulation of seed growth"/>
    <property type="evidence" value="ECO:0000315"/>
    <property type="project" value="TAIR"/>
</dbReference>
<dbReference type="GO" id="GO:0009735">
    <property type="term" value="P:response to cytokinin"/>
    <property type="evidence" value="ECO:0000316"/>
    <property type="project" value="TAIR"/>
</dbReference>
<dbReference type="GO" id="GO:0009414">
    <property type="term" value="P:response to water deprivation"/>
    <property type="evidence" value="ECO:0000316"/>
    <property type="project" value="TAIR"/>
</dbReference>
<dbReference type="GO" id="GO:0048364">
    <property type="term" value="P:root development"/>
    <property type="evidence" value="ECO:0000315"/>
    <property type="project" value="TAIR"/>
</dbReference>
<dbReference type="GO" id="GO:0048367">
    <property type="term" value="P:shoot system development"/>
    <property type="evidence" value="ECO:0000316"/>
    <property type="project" value="TAIR"/>
</dbReference>
<dbReference type="CDD" id="cd17584">
    <property type="entry name" value="REC_typeB_ARR-like"/>
    <property type="match status" value="1"/>
</dbReference>
<dbReference type="FunFam" id="1.10.10.60:FF:000007">
    <property type="entry name" value="Two-component response regulator"/>
    <property type="match status" value="1"/>
</dbReference>
<dbReference type="FunFam" id="3.40.50.2300:FF:000132">
    <property type="entry name" value="Two-component response regulator"/>
    <property type="match status" value="1"/>
</dbReference>
<dbReference type="Gene3D" id="3.40.50.2300">
    <property type="match status" value="1"/>
</dbReference>
<dbReference type="Gene3D" id="1.10.10.60">
    <property type="entry name" value="Homeodomain-like"/>
    <property type="match status" value="1"/>
</dbReference>
<dbReference type="InterPro" id="IPR045279">
    <property type="entry name" value="ARR-like"/>
</dbReference>
<dbReference type="InterPro" id="IPR011006">
    <property type="entry name" value="CheY-like_superfamily"/>
</dbReference>
<dbReference type="InterPro" id="IPR009057">
    <property type="entry name" value="Homeodomain-like_sf"/>
</dbReference>
<dbReference type="InterPro" id="IPR017930">
    <property type="entry name" value="Myb_dom"/>
</dbReference>
<dbReference type="InterPro" id="IPR006447">
    <property type="entry name" value="Myb_dom_plants"/>
</dbReference>
<dbReference type="InterPro" id="IPR017053">
    <property type="entry name" value="Response_reg_B-typ_pln"/>
</dbReference>
<dbReference type="InterPro" id="IPR001005">
    <property type="entry name" value="SANT/Myb"/>
</dbReference>
<dbReference type="InterPro" id="IPR001789">
    <property type="entry name" value="Sig_transdc_resp-reg_receiver"/>
</dbReference>
<dbReference type="NCBIfam" id="TIGR01557">
    <property type="entry name" value="myb_SHAQKYF"/>
    <property type="match status" value="1"/>
</dbReference>
<dbReference type="PANTHER" id="PTHR43874">
    <property type="entry name" value="TWO-COMPONENT RESPONSE REGULATOR"/>
    <property type="match status" value="1"/>
</dbReference>
<dbReference type="PANTHER" id="PTHR43874:SF7">
    <property type="entry name" value="TWO-COMPONENT RESPONSE REGULATOR ARR10"/>
    <property type="match status" value="1"/>
</dbReference>
<dbReference type="Pfam" id="PF00249">
    <property type="entry name" value="Myb_DNA-binding"/>
    <property type="match status" value="1"/>
</dbReference>
<dbReference type="Pfam" id="PF00072">
    <property type="entry name" value="Response_reg"/>
    <property type="match status" value="1"/>
</dbReference>
<dbReference type="PIRSF" id="PIRSF036392">
    <property type="entry name" value="RR_ARR_type-B"/>
    <property type="match status" value="1"/>
</dbReference>
<dbReference type="SMART" id="SM00448">
    <property type="entry name" value="REC"/>
    <property type="match status" value="1"/>
</dbReference>
<dbReference type="SUPFAM" id="SSF52172">
    <property type="entry name" value="CheY-like"/>
    <property type="match status" value="1"/>
</dbReference>
<dbReference type="SUPFAM" id="SSF46689">
    <property type="entry name" value="Homeodomain-like"/>
    <property type="match status" value="1"/>
</dbReference>
<dbReference type="PROSITE" id="PS51294">
    <property type="entry name" value="HTH_MYB"/>
    <property type="match status" value="1"/>
</dbReference>
<dbReference type="PROSITE" id="PS50110">
    <property type="entry name" value="RESPONSE_REGULATORY"/>
    <property type="match status" value="1"/>
</dbReference>
<evidence type="ECO:0000255" key="1"/>
<evidence type="ECO:0000255" key="2">
    <source>
        <dbReference type="PROSITE-ProRule" id="PRU00169"/>
    </source>
</evidence>
<evidence type="ECO:0000255" key="3">
    <source>
        <dbReference type="PROSITE-ProRule" id="PRU00625"/>
    </source>
</evidence>
<evidence type="ECO:0000256" key="4">
    <source>
        <dbReference type="SAM" id="MobiDB-lite"/>
    </source>
</evidence>
<evidence type="ECO:0000269" key="5">
    <source>
    </source>
</evidence>
<evidence type="ECO:0000269" key="6">
    <source>
    </source>
</evidence>
<evidence type="ECO:0000269" key="7">
    <source>
    </source>
</evidence>
<evidence type="ECO:0000305" key="8"/>
<evidence type="ECO:0007829" key="9">
    <source>
        <dbReference type="PDB" id="1IRZ"/>
    </source>
</evidence>
<organism>
    <name type="scientific">Arabidopsis thaliana</name>
    <name type="common">Mouse-ear cress</name>
    <dbReference type="NCBI Taxonomy" id="3702"/>
    <lineage>
        <taxon>Eukaryota</taxon>
        <taxon>Viridiplantae</taxon>
        <taxon>Streptophyta</taxon>
        <taxon>Embryophyta</taxon>
        <taxon>Tracheophyta</taxon>
        <taxon>Spermatophyta</taxon>
        <taxon>Magnoliopsida</taxon>
        <taxon>eudicotyledons</taxon>
        <taxon>Gunneridae</taxon>
        <taxon>Pentapetalae</taxon>
        <taxon>rosids</taxon>
        <taxon>malvids</taxon>
        <taxon>Brassicales</taxon>
        <taxon>Brassicaceae</taxon>
        <taxon>Camelineae</taxon>
        <taxon>Arabidopsis</taxon>
    </lineage>
</organism>